<sequence>MAQLIDGKKLAEDVVSTVKTETEKLVAATGVVPGIAVVIVGEDPASQVYVASKSRKAKECGFHSVQHDLPETASEQELLNLIEGLNNDPAIHGILVQLPLPGHIDSGRVIQTIAPEKDVDGFHFINVGKLGTGEVETAFVPCTPAGAMIMIERVHGRDLSGLNAVVIGRSNIVGKPMFNLLLAANATVTVAHSRTKDLPAIARNADILVAAVGRPQMVKGDWVKPGATVIDVGINRIPAPERGEGKTRLVGDVDFAEAEKVAGAITPVPGGVGPMTIAMLMANTLTAACRSAGMKKPVF</sequence>
<comment type="function">
    <text evidence="1">Catalyzes the oxidation of 5,10-methylenetetrahydrofolate to 5,10-methenyltetrahydrofolate and then the hydrolysis of 5,10-methenyltetrahydrofolate to 10-formyltetrahydrofolate.</text>
</comment>
<comment type="catalytic activity">
    <reaction evidence="1">
        <text>(6R)-5,10-methylene-5,6,7,8-tetrahydrofolate + NADP(+) = (6R)-5,10-methenyltetrahydrofolate + NADPH</text>
        <dbReference type="Rhea" id="RHEA:22812"/>
        <dbReference type="ChEBI" id="CHEBI:15636"/>
        <dbReference type="ChEBI" id="CHEBI:57455"/>
        <dbReference type="ChEBI" id="CHEBI:57783"/>
        <dbReference type="ChEBI" id="CHEBI:58349"/>
        <dbReference type="EC" id="1.5.1.5"/>
    </reaction>
</comment>
<comment type="catalytic activity">
    <reaction evidence="1">
        <text>(6R)-5,10-methenyltetrahydrofolate + H2O = (6R)-10-formyltetrahydrofolate + H(+)</text>
        <dbReference type="Rhea" id="RHEA:23700"/>
        <dbReference type="ChEBI" id="CHEBI:15377"/>
        <dbReference type="ChEBI" id="CHEBI:15378"/>
        <dbReference type="ChEBI" id="CHEBI:57455"/>
        <dbReference type="ChEBI" id="CHEBI:195366"/>
        <dbReference type="EC" id="3.5.4.9"/>
    </reaction>
</comment>
<comment type="pathway">
    <text evidence="1">One-carbon metabolism; tetrahydrofolate interconversion.</text>
</comment>
<comment type="subunit">
    <text evidence="1">Homodimer.</text>
</comment>
<comment type="similarity">
    <text evidence="1">Belongs to the tetrahydrofolate dehydrogenase/cyclohydrolase family.</text>
</comment>
<feature type="chain" id="PRO_0000268294" description="Bifunctional protein FolD">
    <location>
        <begin position="1"/>
        <end position="299"/>
    </location>
</feature>
<feature type="binding site" evidence="1">
    <location>
        <begin position="168"/>
        <end position="170"/>
    </location>
    <ligand>
        <name>NADP(+)</name>
        <dbReference type="ChEBI" id="CHEBI:58349"/>
    </ligand>
</feature>
<feature type="binding site" evidence="1">
    <location>
        <position position="193"/>
    </location>
    <ligand>
        <name>NADP(+)</name>
        <dbReference type="ChEBI" id="CHEBI:58349"/>
    </ligand>
</feature>
<feature type="binding site" evidence="1">
    <location>
        <position position="234"/>
    </location>
    <ligand>
        <name>NADP(+)</name>
        <dbReference type="ChEBI" id="CHEBI:58349"/>
    </ligand>
</feature>
<reference key="1">
    <citation type="journal article" date="2005" name="Infect. Immun.">
        <title>Whole-genome analyses of speciation events in pathogenic Brucellae.</title>
        <authorList>
            <person name="Chain P.S."/>
            <person name="Comerci D.J."/>
            <person name="Tolmasky M.E."/>
            <person name="Larimer F.W."/>
            <person name="Malfatti S.A."/>
            <person name="Vergez L.M."/>
            <person name="Aguero F."/>
            <person name="Land M.L."/>
            <person name="Ugalde R.A."/>
            <person name="Garcia E."/>
        </authorList>
    </citation>
    <scope>NUCLEOTIDE SEQUENCE [LARGE SCALE GENOMIC DNA]</scope>
    <source>
        <strain>2308</strain>
    </source>
</reference>
<proteinExistence type="inferred from homology"/>
<protein>
    <recommendedName>
        <fullName evidence="1">Bifunctional protein FolD</fullName>
    </recommendedName>
    <domain>
        <recommendedName>
            <fullName evidence="1">Methylenetetrahydrofolate dehydrogenase</fullName>
            <ecNumber evidence="1">1.5.1.5</ecNumber>
        </recommendedName>
    </domain>
    <domain>
        <recommendedName>
            <fullName evidence="1">Methenyltetrahydrofolate cyclohydrolase</fullName>
            <ecNumber evidence="1">3.5.4.9</ecNumber>
        </recommendedName>
    </domain>
</protein>
<organism>
    <name type="scientific">Brucella abortus (strain 2308)</name>
    <dbReference type="NCBI Taxonomy" id="359391"/>
    <lineage>
        <taxon>Bacteria</taxon>
        <taxon>Pseudomonadati</taxon>
        <taxon>Pseudomonadota</taxon>
        <taxon>Alphaproteobacteria</taxon>
        <taxon>Hyphomicrobiales</taxon>
        <taxon>Brucellaceae</taxon>
        <taxon>Brucella/Ochrobactrum group</taxon>
        <taxon>Brucella</taxon>
    </lineage>
</organism>
<accession>Q2YL33</accession>
<dbReference type="EC" id="1.5.1.5" evidence="1"/>
<dbReference type="EC" id="3.5.4.9" evidence="1"/>
<dbReference type="EMBL" id="AM040265">
    <property type="protein sequence ID" value="CAJ12623.1"/>
    <property type="molecule type" value="Genomic_DNA"/>
</dbReference>
<dbReference type="RefSeq" id="WP_002967255.1">
    <property type="nucleotide sequence ID" value="NZ_KN046823.1"/>
</dbReference>
<dbReference type="SMR" id="Q2YL33"/>
<dbReference type="STRING" id="359391.BAB2_0457"/>
<dbReference type="GeneID" id="97535127"/>
<dbReference type="KEGG" id="bmf:BAB2_0457"/>
<dbReference type="PATRIC" id="fig|359391.11.peg.2651"/>
<dbReference type="HOGENOM" id="CLU_034045_1_2_5"/>
<dbReference type="UniPathway" id="UPA00193"/>
<dbReference type="Proteomes" id="UP000002719">
    <property type="component" value="Chromosome II"/>
</dbReference>
<dbReference type="GO" id="GO:0005829">
    <property type="term" value="C:cytosol"/>
    <property type="evidence" value="ECO:0007669"/>
    <property type="project" value="TreeGrafter"/>
</dbReference>
<dbReference type="GO" id="GO:0004477">
    <property type="term" value="F:methenyltetrahydrofolate cyclohydrolase activity"/>
    <property type="evidence" value="ECO:0007669"/>
    <property type="project" value="UniProtKB-UniRule"/>
</dbReference>
<dbReference type="GO" id="GO:0004488">
    <property type="term" value="F:methylenetetrahydrofolate dehydrogenase (NADP+) activity"/>
    <property type="evidence" value="ECO:0007669"/>
    <property type="project" value="UniProtKB-UniRule"/>
</dbReference>
<dbReference type="GO" id="GO:0000105">
    <property type="term" value="P:L-histidine biosynthetic process"/>
    <property type="evidence" value="ECO:0007669"/>
    <property type="project" value="UniProtKB-KW"/>
</dbReference>
<dbReference type="GO" id="GO:0009086">
    <property type="term" value="P:methionine biosynthetic process"/>
    <property type="evidence" value="ECO:0007669"/>
    <property type="project" value="UniProtKB-KW"/>
</dbReference>
<dbReference type="GO" id="GO:0006164">
    <property type="term" value="P:purine nucleotide biosynthetic process"/>
    <property type="evidence" value="ECO:0007669"/>
    <property type="project" value="UniProtKB-KW"/>
</dbReference>
<dbReference type="GO" id="GO:0035999">
    <property type="term" value="P:tetrahydrofolate interconversion"/>
    <property type="evidence" value="ECO:0007669"/>
    <property type="project" value="UniProtKB-UniRule"/>
</dbReference>
<dbReference type="CDD" id="cd01080">
    <property type="entry name" value="NAD_bind_m-THF_DH_Cyclohyd"/>
    <property type="match status" value="1"/>
</dbReference>
<dbReference type="FunFam" id="3.40.50.720:FF:000006">
    <property type="entry name" value="Bifunctional protein FolD"/>
    <property type="match status" value="1"/>
</dbReference>
<dbReference type="FunFam" id="3.40.50.10860:FF:000005">
    <property type="entry name" value="C-1-tetrahydrofolate synthase, cytoplasmic, putative"/>
    <property type="match status" value="1"/>
</dbReference>
<dbReference type="Gene3D" id="3.40.50.10860">
    <property type="entry name" value="Leucine Dehydrogenase, chain A, domain 1"/>
    <property type="match status" value="1"/>
</dbReference>
<dbReference type="Gene3D" id="3.40.50.720">
    <property type="entry name" value="NAD(P)-binding Rossmann-like Domain"/>
    <property type="match status" value="1"/>
</dbReference>
<dbReference type="HAMAP" id="MF_01576">
    <property type="entry name" value="THF_DHG_CYH"/>
    <property type="match status" value="1"/>
</dbReference>
<dbReference type="InterPro" id="IPR046346">
    <property type="entry name" value="Aminoacid_DH-like_N_sf"/>
</dbReference>
<dbReference type="InterPro" id="IPR036291">
    <property type="entry name" value="NAD(P)-bd_dom_sf"/>
</dbReference>
<dbReference type="InterPro" id="IPR000672">
    <property type="entry name" value="THF_DH/CycHdrlase"/>
</dbReference>
<dbReference type="InterPro" id="IPR020630">
    <property type="entry name" value="THF_DH/CycHdrlase_cat_dom"/>
</dbReference>
<dbReference type="InterPro" id="IPR020867">
    <property type="entry name" value="THF_DH/CycHdrlase_CS"/>
</dbReference>
<dbReference type="InterPro" id="IPR020631">
    <property type="entry name" value="THF_DH/CycHdrlase_NAD-bd_dom"/>
</dbReference>
<dbReference type="NCBIfam" id="NF008058">
    <property type="entry name" value="PRK10792.1"/>
    <property type="match status" value="1"/>
</dbReference>
<dbReference type="NCBIfam" id="NF010783">
    <property type="entry name" value="PRK14186.1"/>
    <property type="match status" value="1"/>
</dbReference>
<dbReference type="NCBIfam" id="NF010785">
    <property type="entry name" value="PRK14188.1"/>
    <property type="match status" value="1"/>
</dbReference>
<dbReference type="PANTHER" id="PTHR48099:SF5">
    <property type="entry name" value="C-1-TETRAHYDROFOLATE SYNTHASE, CYTOPLASMIC"/>
    <property type="match status" value="1"/>
</dbReference>
<dbReference type="PANTHER" id="PTHR48099">
    <property type="entry name" value="C-1-TETRAHYDROFOLATE SYNTHASE, CYTOPLASMIC-RELATED"/>
    <property type="match status" value="1"/>
</dbReference>
<dbReference type="Pfam" id="PF00763">
    <property type="entry name" value="THF_DHG_CYH"/>
    <property type="match status" value="1"/>
</dbReference>
<dbReference type="Pfam" id="PF02882">
    <property type="entry name" value="THF_DHG_CYH_C"/>
    <property type="match status" value="1"/>
</dbReference>
<dbReference type="PRINTS" id="PR00085">
    <property type="entry name" value="THFDHDRGNASE"/>
</dbReference>
<dbReference type="SUPFAM" id="SSF53223">
    <property type="entry name" value="Aminoacid dehydrogenase-like, N-terminal domain"/>
    <property type="match status" value="1"/>
</dbReference>
<dbReference type="SUPFAM" id="SSF51735">
    <property type="entry name" value="NAD(P)-binding Rossmann-fold domains"/>
    <property type="match status" value="1"/>
</dbReference>
<dbReference type="PROSITE" id="PS00766">
    <property type="entry name" value="THF_DHG_CYH_1"/>
    <property type="match status" value="1"/>
</dbReference>
<dbReference type="PROSITE" id="PS00767">
    <property type="entry name" value="THF_DHG_CYH_2"/>
    <property type="match status" value="1"/>
</dbReference>
<name>FOLD_BRUA2</name>
<evidence type="ECO:0000255" key="1">
    <source>
        <dbReference type="HAMAP-Rule" id="MF_01576"/>
    </source>
</evidence>
<gene>
    <name evidence="1" type="primary">folD</name>
    <name type="ordered locus">BAB2_0457</name>
</gene>
<keyword id="KW-0028">Amino-acid biosynthesis</keyword>
<keyword id="KW-0368">Histidine biosynthesis</keyword>
<keyword id="KW-0378">Hydrolase</keyword>
<keyword id="KW-0486">Methionine biosynthesis</keyword>
<keyword id="KW-0511">Multifunctional enzyme</keyword>
<keyword id="KW-0521">NADP</keyword>
<keyword id="KW-0554">One-carbon metabolism</keyword>
<keyword id="KW-0560">Oxidoreductase</keyword>
<keyword id="KW-0658">Purine biosynthesis</keyword>
<keyword id="KW-1185">Reference proteome</keyword>